<accession>B0TH93</accession>
<keyword id="KW-0963">Cytoplasm</keyword>
<keyword id="KW-0274">FAD</keyword>
<keyword id="KW-0285">Flavoprotein</keyword>
<keyword id="KW-0489">Methyltransferase</keyword>
<keyword id="KW-0520">NAD</keyword>
<keyword id="KW-0521">NADP</keyword>
<keyword id="KW-1185">Reference proteome</keyword>
<keyword id="KW-0808">Transferase</keyword>
<keyword id="KW-0819">tRNA processing</keyword>
<name>TRMFO_HELMI</name>
<protein>
    <recommendedName>
        <fullName evidence="1">Methylenetetrahydrofolate--tRNA-(uracil-5-)-methyltransferase TrmFO</fullName>
        <ecNumber evidence="1">2.1.1.74</ecNumber>
    </recommendedName>
    <alternativeName>
        <fullName evidence="1">Folate-dependent tRNA (uracil-5-)-methyltransferase</fullName>
    </alternativeName>
    <alternativeName>
        <fullName evidence="1">Folate-dependent tRNA(M-5-U54)-methyltransferase</fullName>
    </alternativeName>
</protein>
<proteinExistence type="inferred from homology"/>
<reference key="1">
    <citation type="journal article" date="2008" name="J. Bacteriol.">
        <title>The genome of Heliobacterium modesticaldum, a phototrophic representative of the Firmicutes containing the simplest photosynthetic apparatus.</title>
        <authorList>
            <person name="Sattley W.M."/>
            <person name="Madigan M.T."/>
            <person name="Swingley W.D."/>
            <person name="Cheung P.C."/>
            <person name="Clocksin K.M."/>
            <person name="Conrad A.L."/>
            <person name="Dejesa L.C."/>
            <person name="Honchak B.M."/>
            <person name="Jung D.O."/>
            <person name="Karbach L.E."/>
            <person name="Kurdoglu A."/>
            <person name="Lahiri S."/>
            <person name="Mastrian S.D."/>
            <person name="Page L.E."/>
            <person name="Taylor H.L."/>
            <person name="Wang Z.T."/>
            <person name="Raymond J."/>
            <person name="Chen M."/>
            <person name="Blankenship R.E."/>
            <person name="Touchman J.W."/>
        </authorList>
    </citation>
    <scope>NUCLEOTIDE SEQUENCE [LARGE SCALE GENOMIC DNA]</scope>
    <source>
        <strain>ATCC 51547 / Ice1</strain>
    </source>
</reference>
<feature type="chain" id="PRO_0000346343" description="Methylenetetrahydrofolate--tRNA-(uracil-5-)-methyltransferase TrmFO">
    <location>
        <begin position="1"/>
        <end position="439"/>
    </location>
</feature>
<feature type="binding site" evidence="1">
    <location>
        <begin position="7"/>
        <end position="12"/>
    </location>
    <ligand>
        <name>FAD</name>
        <dbReference type="ChEBI" id="CHEBI:57692"/>
    </ligand>
</feature>
<organism>
    <name type="scientific">Heliobacterium modesticaldum (strain ATCC 51547 / Ice1)</name>
    <dbReference type="NCBI Taxonomy" id="498761"/>
    <lineage>
        <taxon>Bacteria</taxon>
        <taxon>Bacillati</taxon>
        <taxon>Bacillota</taxon>
        <taxon>Clostridia</taxon>
        <taxon>Eubacteriales</taxon>
        <taxon>Heliobacteriaceae</taxon>
        <taxon>Heliomicrobium</taxon>
    </lineage>
</organism>
<dbReference type="EC" id="2.1.1.74" evidence="1"/>
<dbReference type="EMBL" id="CP000930">
    <property type="protein sequence ID" value="ABZ84768.1"/>
    <property type="molecule type" value="Genomic_DNA"/>
</dbReference>
<dbReference type="RefSeq" id="WP_012283268.1">
    <property type="nucleotide sequence ID" value="NC_010337.2"/>
</dbReference>
<dbReference type="SMR" id="B0TH93"/>
<dbReference type="STRING" id="498761.HM1_2212"/>
<dbReference type="KEGG" id="hmo:HM1_2212"/>
<dbReference type="eggNOG" id="COG1206">
    <property type="taxonomic scope" value="Bacteria"/>
</dbReference>
<dbReference type="HOGENOM" id="CLU_033057_1_0_9"/>
<dbReference type="OrthoDB" id="9803114at2"/>
<dbReference type="Proteomes" id="UP000008550">
    <property type="component" value="Chromosome"/>
</dbReference>
<dbReference type="GO" id="GO:0005829">
    <property type="term" value="C:cytosol"/>
    <property type="evidence" value="ECO:0007669"/>
    <property type="project" value="TreeGrafter"/>
</dbReference>
<dbReference type="GO" id="GO:0050660">
    <property type="term" value="F:flavin adenine dinucleotide binding"/>
    <property type="evidence" value="ECO:0007669"/>
    <property type="project" value="UniProtKB-UniRule"/>
</dbReference>
<dbReference type="GO" id="GO:0047151">
    <property type="term" value="F:tRNA (uracil(54)-C5)-methyltransferase activity, 5,10-methylenetetrahydrofolate-dependent"/>
    <property type="evidence" value="ECO:0007669"/>
    <property type="project" value="UniProtKB-UniRule"/>
</dbReference>
<dbReference type="GO" id="GO:0030488">
    <property type="term" value="P:tRNA methylation"/>
    <property type="evidence" value="ECO:0007669"/>
    <property type="project" value="TreeGrafter"/>
</dbReference>
<dbReference type="GO" id="GO:0002098">
    <property type="term" value="P:tRNA wobble uridine modification"/>
    <property type="evidence" value="ECO:0007669"/>
    <property type="project" value="TreeGrafter"/>
</dbReference>
<dbReference type="FunFam" id="3.50.50.60:FF:000035">
    <property type="entry name" value="Methylenetetrahydrofolate--tRNA-(uracil-5-)-methyltransferase TrmFO"/>
    <property type="match status" value="1"/>
</dbReference>
<dbReference type="Gene3D" id="3.50.50.60">
    <property type="entry name" value="FAD/NAD(P)-binding domain"/>
    <property type="match status" value="2"/>
</dbReference>
<dbReference type="HAMAP" id="MF_01037">
    <property type="entry name" value="TrmFO"/>
    <property type="match status" value="1"/>
</dbReference>
<dbReference type="InterPro" id="IPR036188">
    <property type="entry name" value="FAD/NAD-bd_sf"/>
</dbReference>
<dbReference type="InterPro" id="IPR002218">
    <property type="entry name" value="MnmG-rel"/>
</dbReference>
<dbReference type="InterPro" id="IPR020595">
    <property type="entry name" value="MnmG-rel_CS"/>
</dbReference>
<dbReference type="InterPro" id="IPR040131">
    <property type="entry name" value="MnmG_N"/>
</dbReference>
<dbReference type="InterPro" id="IPR004417">
    <property type="entry name" value="TrmFO"/>
</dbReference>
<dbReference type="NCBIfam" id="TIGR00137">
    <property type="entry name" value="gid_trmFO"/>
    <property type="match status" value="1"/>
</dbReference>
<dbReference type="NCBIfam" id="NF003739">
    <property type="entry name" value="PRK05335.1"/>
    <property type="match status" value="1"/>
</dbReference>
<dbReference type="PANTHER" id="PTHR11806">
    <property type="entry name" value="GLUCOSE INHIBITED DIVISION PROTEIN A"/>
    <property type="match status" value="1"/>
</dbReference>
<dbReference type="PANTHER" id="PTHR11806:SF2">
    <property type="entry name" value="METHYLENETETRAHYDROFOLATE--TRNA-(URACIL-5-)-METHYLTRANSFERASE TRMFO"/>
    <property type="match status" value="1"/>
</dbReference>
<dbReference type="Pfam" id="PF01134">
    <property type="entry name" value="GIDA"/>
    <property type="match status" value="1"/>
</dbReference>
<dbReference type="SUPFAM" id="SSF51905">
    <property type="entry name" value="FAD/NAD(P)-binding domain"/>
    <property type="match status" value="1"/>
</dbReference>
<dbReference type="PROSITE" id="PS01281">
    <property type="entry name" value="GIDA_2"/>
    <property type="match status" value="1"/>
</dbReference>
<gene>
    <name evidence="1" type="primary">trmFO</name>
    <name type="ordered locus">Helmi_21430</name>
    <name type="ORF">HM1_2212</name>
</gene>
<evidence type="ECO:0000255" key="1">
    <source>
        <dbReference type="HAMAP-Rule" id="MF_01037"/>
    </source>
</evidence>
<sequence>MTVTIIGAGLAGAEAAWQIVRQGVPVQLFEMRPTEMTPAHKTGNFAELVCSNSLRGAALENAVGLLKEEMRRLGSLIMEAADAHAVPAGGALAVDREGFSACITEKLVNHPRITLCREEIREIPAARPLIIASGPLTSPALSRAIQGLTGEDYFYFYDAAAPIVYAESVDLSVAFWASRYDKGDADYLNCPMDESEYDRFYEALVTAEAHPLKEFEKEIYFEGCMPVEVMAKRGKQTLLFGPLKPVGLIDPRTGRRPFAVVQLRKENRQGSMYNLVGFQTHLKWPEQKRVFRMIPGLEQAEFVRYGVMHRNTFINSPTLLLPTYQLRKDPSVFFAGQITGVEGYVESAAAGLVAGLNAARLVQGRSPLRFPPETAIGALPAYITTAEAKHFQPMNVTYGLFPPLVEKVKGKRPRQQAHARRALESLERFMAENLIVKEI</sequence>
<comment type="function">
    <text evidence="1">Catalyzes the folate-dependent formation of 5-methyl-uridine at position 54 (M-5-U54) in all tRNAs.</text>
</comment>
<comment type="catalytic activity">
    <reaction evidence="1">
        <text>uridine(54) in tRNA + (6R)-5,10-methylene-5,6,7,8-tetrahydrofolate + NADH + H(+) = 5-methyluridine(54) in tRNA + (6S)-5,6,7,8-tetrahydrofolate + NAD(+)</text>
        <dbReference type="Rhea" id="RHEA:16873"/>
        <dbReference type="Rhea" id="RHEA-COMP:10167"/>
        <dbReference type="Rhea" id="RHEA-COMP:10193"/>
        <dbReference type="ChEBI" id="CHEBI:15378"/>
        <dbReference type="ChEBI" id="CHEBI:15636"/>
        <dbReference type="ChEBI" id="CHEBI:57453"/>
        <dbReference type="ChEBI" id="CHEBI:57540"/>
        <dbReference type="ChEBI" id="CHEBI:57945"/>
        <dbReference type="ChEBI" id="CHEBI:65315"/>
        <dbReference type="ChEBI" id="CHEBI:74447"/>
        <dbReference type="EC" id="2.1.1.74"/>
    </reaction>
</comment>
<comment type="catalytic activity">
    <reaction evidence="1">
        <text>uridine(54) in tRNA + (6R)-5,10-methylene-5,6,7,8-tetrahydrofolate + NADPH + H(+) = 5-methyluridine(54) in tRNA + (6S)-5,6,7,8-tetrahydrofolate + NADP(+)</text>
        <dbReference type="Rhea" id="RHEA:62372"/>
        <dbReference type="Rhea" id="RHEA-COMP:10167"/>
        <dbReference type="Rhea" id="RHEA-COMP:10193"/>
        <dbReference type="ChEBI" id="CHEBI:15378"/>
        <dbReference type="ChEBI" id="CHEBI:15636"/>
        <dbReference type="ChEBI" id="CHEBI:57453"/>
        <dbReference type="ChEBI" id="CHEBI:57783"/>
        <dbReference type="ChEBI" id="CHEBI:58349"/>
        <dbReference type="ChEBI" id="CHEBI:65315"/>
        <dbReference type="ChEBI" id="CHEBI:74447"/>
        <dbReference type="EC" id="2.1.1.74"/>
    </reaction>
</comment>
<comment type="cofactor">
    <cofactor evidence="1">
        <name>FAD</name>
        <dbReference type="ChEBI" id="CHEBI:57692"/>
    </cofactor>
</comment>
<comment type="subcellular location">
    <subcellularLocation>
        <location evidence="1">Cytoplasm</location>
    </subcellularLocation>
</comment>
<comment type="similarity">
    <text evidence="1">Belongs to the MnmG family. TrmFO subfamily.</text>
</comment>